<name>COBD_CITK8</name>
<reference key="1">
    <citation type="submission" date="2007-08" db="EMBL/GenBank/DDBJ databases">
        <authorList>
            <consortium name="The Citrobacter koseri Genome Sequencing Project"/>
            <person name="McClelland M."/>
            <person name="Sanderson E.K."/>
            <person name="Porwollik S."/>
            <person name="Spieth J."/>
            <person name="Clifton W.S."/>
            <person name="Latreille P."/>
            <person name="Courtney L."/>
            <person name="Wang C."/>
            <person name="Pepin K."/>
            <person name="Bhonagiri V."/>
            <person name="Nash W."/>
            <person name="Johnson M."/>
            <person name="Thiruvilangam P."/>
            <person name="Wilson R."/>
        </authorList>
    </citation>
    <scope>NUCLEOTIDE SEQUENCE [LARGE SCALE GENOMIC DNA]</scope>
    <source>
        <strain>ATCC BAA-895 / CDC 4225-83 / SGSC4696</strain>
    </source>
</reference>
<comment type="function">
    <text evidence="1">Converts cobyric acid to cobinamide by the addition of aminopropanol on the F carboxylic group.</text>
</comment>
<comment type="pathway">
    <text evidence="1">Cofactor biosynthesis; adenosylcobalamin biosynthesis.</text>
</comment>
<comment type="subcellular location">
    <subcellularLocation>
        <location evidence="1">Cell membrane</location>
        <topology evidence="1">Multi-pass membrane protein</topology>
    </subcellularLocation>
</comment>
<comment type="similarity">
    <text evidence="1">Belongs to the CobD/CbiB family.</text>
</comment>
<organism>
    <name type="scientific">Citrobacter koseri (strain ATCC BAA-895 / CDC 4225-83 / SGSC4696)</name>
    <dbReference type="NCBI Taxonomy" id="290338"/>
    <lineage>
        <taxon>Bacteria</taxon>
        <taxon>Pseudomonadati</taxon>
        <taxon>Pseudomonadota</taxon>
        <taxon>Gammaproteobacteria</taxon>
        <taxon>Enterobacterales</taxon>
        <taxon>Enterobacteriaceae</taxon>
        <taxon>Citrobacter</taxon>
    </lineage>
</organism>
<evidence type="ECO:0000255" key="1">
    <source>
        <dbReference type="HAMAP-Rule" id="MF_00024"/>
    </source>
</evidence>
<feature type="chain" id="PRO_1000074378" description="Cobalamin biosynthesis protein CobD">
    <location>
        <begin position="1"/>
        <end position="319"/>
    </location>
</feature>
<feature type="transmembrane region" description="Helical" evidence="1">
    <location>
        <begin position="55"/>
        <end position="75"/>
    </location>
</feature>
<feature type="transmembrane region" description="Helical" evidence="1">
    <location>
        <begin position="78"/>
        <end position="98"/>
    </location>
</feature>
<feature type="transmembrane region" description="Helical" evidence="1">
    <location>
        <begin position="153"/>
        <end position="173"/>
    </location>
</feature>
<feature type="transmembrane region" description="Helical" evidence="1">
    <location>
        <begin position="296"/>
        <end position="316"/>
    </location>
</feature>
<gene>
    <name evidence="1" type="primary">cobD</name>
    <name type="ordered locus">CKO_00804</name>
</gene>
<dbReference type="EMBL" id="CP000822">
    <property type="protein sequence ID" value="ABV11956.1"/>
    <property type="molecule type" value="Genomic_DNA"/>
</dbReference>
<dbReference type="RefSeq" id="WP_012131777.1">
    <property type="nucleotide sequence ID" value="NC_009792.1"/>
</dbReference>
<dbReference type="STRING" id="290338.CKO_00804"/>
<dbReference type="GeneID" id="45135001"/>
<dbReference type="KEGG" id="cko:CKO_00804"/>
<dbReference type="HOGENOM" id="CLU_054212_0_0_6"/>
<dbReference type="OrthoDB" id="9811967at2"/>
<dbReference type="UniPathway" id="UPA00148"/>
<dbReference type="Proteomes" id="UP000008148">
    <property type="component" value="Chromosome"/>
</dbReference>
<dbReference type="GO" id="GO:0005886">
    <property type="term" value="C:plasma membrane"/>
    <property type="evidence" value="ECO:0007669"/>
    <property type="project" value="UniProtKB-SubCell"/>
</dbReference>
<dbReference type="GO" id="GO:0015420">
    <property type="term" value="F:ABC-type vitamin B12 transporter activity"/>
    <property type="evidence" value="ECO:0007669"/>
    <property type="project" value="UniProtKB-UniRule"/>
</dbReference>
<dbReference type="GO" id="GO:0048472">
    <property type="term" value="F:threonine-phosphate decarboxylase activity"/>
    <property type="evidence" value="ECO:0007669"/>
    <property type="project" value="InterPro"/>
</dbReference>
<dbReference type="GO" id="GO:0009236">
    <property type="term" value="P:cobalamin biosynthetic process"/>
    <property type="evidence" value="ECO:0007669"/>
    <property type="project" value="UniProtKB-UniRule"/>
</dbReference>
<dbReference type="HAMAP" id="MF_00024">
    <property type="entry name" value="CobD_CbiB"/>
    <property type="match status" value="1"/>
</dbReference>
<dbReference type="InterPro" id="IPR004485">
    <property type="entry name" value="Cobalamin_biosynth_CobD/CbiB"/>
</dbReference>
<dbReference type="NCBIfam" id="TIGR00380">
    <property type="entry name" value="cobal_cbiB"/>
    <property type="match status" value="1"/>
</dbReference>
<dbReference type="PANTHER" id="PTHR34308">
    <property type="entry name" value="COBALAMIN BIOSYNTHESIS PROTEIN CBIB"/>
    <property type="match status" value="1"/>
</dbReference>
<dbReference type="PANTHER" id="PTHR34308:SF1">
    <property type="entry name" value="COBALAMIN BIOSYNTHESIS PROTEIN CBIB"/>
    <property type="match status" value="1"/>
</dbReference>
<dbReference type="Pfam" id="PF03186">
    <property type="entry name" value="CobD_Cbib"/>
    <property type="match status" value="1"/>
</dbReference>
<keyword id="KW-1003">Cell membrane</keyword>
<keyword id="KW-0169">Cobalamin biosynthesis</keyword>
<keyword id="KW-0472">Membrane</keyword>
<keyword id="KW-1185">Reference proteome</keyword>
<keyword id="KW-0812">Transmembrane</keyword>
<keyword id="KW-1133">Transmembrane helix</keyword>
<accession>A8AEP3</accession>
<protein>
    <recommendedName>
        <fullName evidence="1">Cobalamin biosynthesis protein CobD</fullName>
    </recommendedName>
</protein>
<sequence length="319" mass="35395">MTVLAWCIAWLLDFVIGDPQNWPHPVRWIGNLISATQRVVRRYCHSDRSLRIGGAVMWLVVVGVTWAVSWGVLALASEIHPWFGWLVEIWMIFTVLAGRCLANAARDVERPLRAGDLAESREKLSWIVGRDTSQLQPEQVNRAVVETVAENTVDGIIAPLFFLFLGGAPLAMAYKAVNTLDSMVGYKHEKYRAIGMVSARLDDIANVIPARLSWLLLSIAAALCRYDGYRALHIGWRDRYNHSSPNCAWSEASVAGALGIRLGGPNDYFGERVEKPWIGDAQRGISVDDISRTIRLMWVASTLALALFIAVRCLLVGAA</sequence>
<proteinExistence type="inferred from homology"/>